<dbReference type="EC" id="3.6.5.n1" evidence="1"/>
<dbReference type="EMBL" id="AL445563">
    <property type="protein sequence ID" value="CAC13420.1"/>
    <property type="status" value="ALT_INIT"/>
    <property type="molecule type" value="Genomic_DNA"/>
</dbReference>
<dbReference type="PIR" id="G90542">
    <property type="entry name" value="G90542"/>
</dbReference>
<dbReference type="RefSeq" id="WP_041363992.1">
    <property type="nucleotide sequence ID" value="NC_002771.1"/>
</dbReference>
<dbReference type="SMR" id="Q98QW3"/>
<dbReference type="STRING" id="272635.gene:17576835"/>
<dbReference type="KEGG" id="mpu:MYPU_2470"/>
<dbReference type="eggNOG" id="COG0481">
    <property type="taxonomic scope" value="Bacteria"/>
</dbReference>
<dbReference type="HOGENOM" id="CLU_009995_3_3_14"/>
<dbReference type="BioCyc" id="MPUL272635:G1GT6-248-MONOMER"/>
<dbReference type="Proteomes" id="UP000000528">
    <property type="component" value="Chromosome"/>
</dbReference>
<dbReference type="GO" id="GO:0005886">
    <property type="term" value="C:plasma membrane"/>
    <property type="evidence" value="ECO:0007669"/>
    <property type="project" value="UniProtKB-SubCell"/>
</dbReference>
<dbReference type="GO" id="GO:0005525">
    <property type="term" value="F:GTP binding"/>
    <property type="evidence" value="ECO:0007669"/>
    <property type="project" value="UniProtKB-UniRule"/>
</dbReference>
<dbReference type="GO" id="GO:0003924">
    <property type="term" value="F:GTPase activity"/>
    <property type="evidence" value="ECO:0007669"/>
    <property type="project" value="UniProtKB-UniRule"/>
</dbReference>
<dbReference type="GO" id="GO:0043022">
    <property type="term" value="F:ribosome binding"/>
    <property type="evidence" value="ECO:0007669"/>
    <property type="project" value="UniProtKB-UniRule"/>
</dbReference>
<dbReference type="GO" id="GO:0003746">
    <property type="term" value="F:translation elongation factor activity"/>
    <property type="evidence" value="ECO:0007669"/>
    <property type="project" value="UniProtKB-UniRule"/>
</dbReference>
<dbReference type="GO" id="GO:0045727">
    <property type="term" value="P:positive regulation of translation"/>
    <property type="evidence" value="ECO:0007669"/>
    <property type="project" value="UniProtKB-UniRule"/>
</dbReference>
<dbReference type="CDD" id="cd03699">
    <property type="entry name" value="EF4_II"/>
    <property type="match status" value="1"/>
</dbReference>
<dbReference type="CDD" id="cd16260">
    <property type="entry name" value="EF4_III"/>
    <property type="match status" value="1"/>
</dbReference>
<dbReference type="CDD" id="cd01890">
    <property type="entry name" value="LepA"/>
    <property type="match status" value="1"/>
</dbReference>
<dbReference type="CDD" id="cd03709">
    <property type="entry name" value="lepA_C"/>
    <property type="match status" value="1"/>
</dbReference>
<dbReference type="FunFam" id="3.40.50.300:FF:000078">
    <property type="entry name" value="Elongation factor 4"/>
    <property type="match status" value="1"/>
</dbReference>
<dbReference type="FunFam" id="2.40.30.10:FF:000015">
    <property type="entry name" value="Translation factor GUF1, mitochondrial"/>
    <property type="match status" value="1"/>
</dbReference>
<dbReference type="FunFam" id="3.30.70.240:FF:000007">
    <property type="entry name" value="Translation factor GUF1, mitochondrial"/>
    <property type="match status" value="1"/>
</dbReference>
<dbReference type="FunFam" id="3.30.70.2570:FF:000001">
    <property type="entry name" value="Translation factor GUF1, mitochondrial"/>
    <property type="match status" value="1"/>
</dbReference>
<dbReference type="FunFam" id="3.30.70.870:FF:000004">
    <property type="entry name" value="Translation factor GUF1, mitochondrial"/>
    <property type="match status" value="1"/>
</dbReference>
<dbReference type="Gene3D" id="3.30.70.240">
    <property type="match status" value="1"/>
</dbReference>
<dbReference type="Gene3D" id="3.30.70.2570">
    <property type="entry name" value="Elongation factor 4, C-terminal domain"/>
    <property type="match status" value="1"/>
</dbReference>
<dbReference type="Gene3D" id="3.30.70.870">
    <property type="entry name" value="Elongation Factor G (Translational Gtpase), domain 3"/>
    <property type="match status" value="1"/>
</dbReference>
<dbReference type="Gene3D" id="3.40.50.300">
    <property type="entry name" value="P-loop containing nucleotide triphosphate hydrolases"/>
    <property type="match status" value="1"/>
</dbReference>
<dbReference type="Gene3D" id="2.40.30.10">
    <property type="entry name" value="Translation factors"/>
    <property type="match status" value="1"/>
</dbReference>
<dbReference type="HAMAP" id="MF_00071">
    <property type="entry name" value="LepA"/>
    <property type="match status" value="1"/>
</dbReference>
<dbReference type="InterPro" id="IPR006297">
    <property type="entry name" value="EF-4"/>
</dbReference>
<dbReference type="InterPro" id="IPR035647">
    <property type="entry name" value="EFG_III/V"/>
</dbReference>
<dbReference type="InterPro" id="IPR000640">
    <property type="entry name" value="EFG_V-like"/>
</dbReference>
<dbReference type="InterPro" id="IPR031157">
    <property type="entry name" value="G_TR_CS"/>
</dbReference>
<dbReference type="InterPro" id="IPR038363">
    <property type="entry name" value="LepA_C_sf"/>
</dbReference>
<dbReference type="InterPro" id="IPR013842">
    <property type="entry name" value="LepA_CTD"/>
</dbReference>
<dbReference type="InterPro" id="IPR035654">
    <property type="entry name" value="LepA_IV"/>
</dbReference>
<dbReference type="InterPro" id="IPR027417">
    <property type="entry name" value="P-loop_NTPase"/>
</dbReference>
<dbReference type="InterPro" id="IPR005225">
    <property type="entry name" value="Small_GTP-bd"/>
</dbReference>
<dbReference type="InterPro" id="IPR000795">
    <property type="entry name" value="T_Tr_GTP-bd_dom"/>
</dbReference>
<dbReference type="InterPro" id="IPR009000">
    <property type="entry name" value="Transl_B-barrel_sf"/>
</dbReference>
<dbReference type="NCBIfam" id="TIGR01393">
    <property type="entry name" value="lepA"/>
    <property type="match status" value="1"/>
</dbReference>
<dbReference type="NCBIfam" id="TIGR00231">
    <property type="entry name" value="small_GTP"/>
    <property type="match status" value="1"/>
</dbReference>
<dbReference type="PANTHER" id="PTHR43512:SF4">
    <property type="entry name" value="TRANSLATION FACTOR GUF1 HOMOLOG, CHLOROPLASTIC"/>
    <property type="match status" value="1"/>
</dbReference>
<dbReference type="PANTHER" id="PTHR43512">
    <property type="entry name" value="TRANSLATION FACTOR GUF1-RELATED"/>
    <property type="match status" value="1"/>
</dbReference>
<dbReference type="Pfam" id="PF00679">
    <property type="entry name" value="EFG_C"/>
    <property type="match status" value="1"/>
</dbReference>
<dbReference type="Pfam" id="PF00009">
    <property type="entry name" value="GTP_EFTU"/>
    <property type="match status" value="1"/>
</dbReference>
<dbReference type="Pfam" id="PF06421">
    <property type="entry name" value="LepA_C"/>
    <property type="match status" value="1"/>
</dbReference>
<dbReference type="PRINTS" id="PR00315">
    <property type="entry name" value="ELONGATNFCT"/>
</dbReference>
<dbReference type="SMART" id="SM00838">
    <property type="entry name" value="EFG_C"/>
    <property type="match status" value="1"/>
</dbReference>
<dbReference type="SUPFAM" id="SSF54980">
    <property type="entry name" value="EF-G C-terminal domain-like"/>
    <property type="match status" value="2"/>
</dbReference>
<dbReference type="SUPFAM" id="SSF52540">
    <property type="entry name" value="P-loop containing nucleoside triphosphate hydrolases"/>
    <property type="match status" value="1"/>
</dbReference>
<dbReference type="SUPFAM" id="SSF50447">
    <property type="entry name" value="Translation proteins"/>
    <property type="match status" value="1"/>
</dbReference>
<dbReference type="PROSITE" id="PS00301">
    <property type="entry name" value="G_TR_1"/>
    <property type="match status" value="1"/>
</dbReference>
<dbReference type="PROSITE" id="PS51722">
    <property type="entry name" value="G_TR_2"/>
    <property type="match status" value="1"/>
</dbReference>
<feature type="chain" id="PRO_0000176306" description="Elongation factor 4">
    <location>
        <begin position="1"/>
        <end position="597"/>
    </location>
</feature>
<feature type="domain" description="tr-type G">
    <location>
        <begin position="4"/>
        <end position="181"/>
    </location>
</feature>
<feature type="binding site" evidence="1">
    <location>
        <begin position="16"/>
        <end position="21"/>
    </location>
    <ligand>
        <name>GTP</name>
        <dbReference type="ChEBI" id="CHEBI:37565"/>
    </ligand>
</feature>
<feature type="binding site" evidence="1">
    <location>
        <begin position="128"/>
        <end position="131"/>
    </location>
    <ligand>
        <name>GTP</name>
        <dbReference type="ChEBI" id="CHEBI:37565"/>
    </ligand>
</feature>
<name>LEPA_MYCPU</name>
<evidence type="ECO:0000255" key="1">
    <source>
        <dbReference type="HAMAP-Rule" id="MF_00071"/>
    </source>
</evidence>
<evidence type="ECO:0000305" key="2"/>
<gene>
    <name evidence="1" type="primary">lepA</name>
    <name type="ordered locus">MYPU_2470</name>
</gene>
<keyword id="KW-1003">Cell membrane</keyword>
<keyword id="KW-0342">GTP-binding</keyword>
<keyword id="KW-0378">Hydrolase</keyword>
<keyword id="KW-0472">Membrane</keyword>
<keyword id="KW-0547">Nucleotide-binding</keyword>
<keyword id="KW-0648">Protein biosynthesis</keyword>
<keyword id="KW-1185">Reference proteome</keyword>
<reference key="1">
    <citation type="journal article" date="2001" name="Nucleic Acids Res.">
        <title>The complete genome sequence of the murine respiratory pathogen Mycoplasma pulmonis.</title>
        <authorList>
            <person name="Chambaud I."/>
            <person name="Heilig R."/>
            <person name="Ferris S."/>
            <person name="Barbe V."/>
            <person name="Samson D."/>
            <person name="Galisson F."/>
            <person name="Moszer I."/>
            <person name="Dybvig K."/>
            <person name="Wroblewski H."/>
            <person name="Viari A."/>
            <person name="Rocha E.P.C."/>
            <person name="Blanchard A."/>
        </authorList>
    </citation>
    <scope>NUCLEOTIDE SEQUENCE [LARGE SCALE GENOMIC DNA]</scope>
    <source>
        <strain>UAB CTIP</strain>
    </source>
</reference>
<accession>Q98QW3</accession>
<organism>
    <name type="scientific">Mycoplasmopsis pulmonis (strain UAB CTIP)</name>
    <name type="common">Mycoplasma pulmonis</name>
    <dbReference type="NCBI Taxonomy" id="272635"/>
    <lineage>
        <taxon>Bacteria</taxon>
        <taxon>Bacillati</taxon>
        <taxon>Mycoplasmatota</taxon>
        <taxon>Mycoplasmoidales</taxon>
        <taxon>Metamycoplasmataceae</taxon>
        <taxon>Mycoplasmopsis</taxon>
    </lineage>
</organism>
<comment type="function">
    <text evidence="1">Required for accurate and efficient protein synthesis under certain stress conditions. May act as a fidelity factor of the translation reaction, by catalyzing a one-codon backward translocation of tRNAs on improperly translocated ribosomes. Back-translocation proceeds from a post-translocation (POST) complex to a pre-translocation (PRE) complex, thus giving elongation factor G a second chance to translocate the tRNAs correctly. Binds to ribosomes in a GTP-dependent manner.</text>
</comment>
<comment type="catalytic activity">
    <reaction evidence="1">
        <text>GTP + H2O = GDP + phosphate + H(+)</text>
        <dbReference type="Rhea" id="RHEA:19669"/>
        <dbReference type="ChEBI" id="CHEBI:15377"/>
        <dbReference type="ChEBI" id="CHEBI:15378"/>
        <dbReference type="ChEBI" id="CHEBI:37565"/>
        <dbReference type="ChEBI" id="CHEBI:43474"/>
        <dbReference type="ChEBI" id="CHEBI:58189"/>
        <dbReference type="EC" id="3.6.5.n1"/>
    </reaction>
</comment>
<comment type="subcellular location">
    <subcellularLocation>
        <location evidence="1">Cell membrane</location>
        <topology evidence="1">Peripheral membrane protein</topology>
        <orientation evidence="1">Cytoplasmic side</orientation>
    </subcellularLocation>
</comment>
<comment type="similarity">
    <text evidence="1">Belongs to the TRAFAC class translation factor GTPase superfamily. Classic translation factor GTPase family. LepA subfamily.</text>
</comment>
<comment type="sequence caution" evidence="2">
    <conflict type="erroneous initiation">
        <sequence resource="EMBL-CDS" id="CAC13420"/>
    </conflict>
</comment>
<protein>
    <recommendedName>
        <fullName evidence="1">Elongation factor 4</fullName>
        <shortName evidence="1">EF-4</shortName>
        <ecNumber evidence="1">3.6.5.n1</ecNumber>
    </recommendedName>
    <alternativeName>
        <fullName evidence="1">Ribosomal back-translocase LepA</fullName>
    </alternativeName>
</protein>
<proteinExistence type="inferred from homology"/>
<sequence>MNKSKIRNFSIIAHIDHGKSTLADRILEITQTVSTRELKAQHLDSMDLEQERGITIKLNAVQIKYKDYIFHLIDTPGHVDFTYEVSRSLAASEGALLLVDATQGIEAQTLANAYLALENNLKIIPIINKIDLPSADPERIKGEIEEVIGISAKDTILISAKSGLNVEKVLEEIVDKISYPIDADDDKPLKALVFDSYFDAYRGVILLVRIFEGKIAVNDQFKFISTNKQFHVIELGVRTPTEVKKPFLESGEVGWIAASIRDAKDVSVGDTLTLVKNPTKEALPGYKKVKAVVFTGFYPIDGKDYPVLKESLEKISLSDSSITWELESSKALGFGFRVGFLGMLHMEVLQERLKREFNIDIIATAPSVEYKVYLTNNKVEIVSNPSDLPDRNYIKNIKEPFIRSFILVTEEFIGGIMELCQSKRGVYVNIEYIDKRVKIIYELPLSEIILDFFDKLKSISKGYASFDYEFIEYRDADLVKVDILLNKEKVDAFSFISHRENAYERSKELALKLKDVIPKQSFEIPIQAIIGAKVIARETIKAYRKDVTAKLYGGDVTRRQKLLKKQKEGKKRMKSIGSVEVPQEAFLSVLKSNMDKK</sequence>